<gene>
    <name evidence="1" type="primary">fliE</name>
    <name type="ordered locus">BWG_1742</name>
</gene>
<feature type="chain" id="PRO_1000212722" description="Flagellar hook-basal body complex protein FliE">
    <location>
        <begin position="1"/>
        <end position="104"/>
    </location>
</feature>
<sequence>MSAIQGIEGVISQLQATAMSARAQESLPQPTISFAGQLHAALDRISDTQTAARTQAEKFTLGEPGVALNDVMTDMQKASVSMQMGIQVRNKLVAAYQEVMSMQV</sequence>
<proteinExistence type="inferred from homology"/>
<name>FLIE_ECOBW</name>
<reference key="1">
    <citation type="journal article" date="2009" name="J. Bacteriol.">
        <title>Genomic sequencing reveals regulatory mutations and recombinational events in the widely used MC4100 lineage of Escherichia coli K-12.</title>
        <authorList>
            <person name="Ferenci T."/>
            <person name="Zhou Z."/>
            <person name="Betteridge T."/>
            <person name="Ren Y."/>
            <person name="Liu Y."/>
            <person name="Feng L."/>
            <person name="Reeves P.R."/>
            <person name="Wang L."/>
        </authorList>
    </citation>
    <scope>NUCLEOTIDE SEQUENCE [LARGE SCALE GENOMIC DNA]</scope>
    <source>
        <strain>K12 / MC4100 / BW2952</strain>
    </source>
</reference>
<organism>
    <name type="scientific">Escherichia coli (strain K12 / MC4100 / BW2952)</name>
    <dbReference type="NCBI Taxonomy" id="595496"/>
    <lineage>
        <taxon>Bacteria</taxon>
        <taxon>Pseudomonadati</taxon>
        <taxon>Pseudomonadota</taxon>
        <taxon>Gammaproteobacteria</taxon>
        <taxon>Enterobacterales</taxon>
        <taxon>Enterobacteriaceae</taxon>
        <taxon>Escherichia</taxon>
    </lineage>
</organism>
<dbReference type="EMBL" id="CP001396">
    <property type="protein sequence ID" value="ACR63091.1"/>
    <property type="molecule type" value="Genomic_DNA"/>
</dbReference>
<dbReference type="RefSeq" id="WP_001274299.1">
    <property type="nucleotide sequence ID" value="NC_012759.1"/>
</dbReference>
<dbReference type="SMR" id="C4ZQL1"/>
<dbReference type="GeneID" id="93775248"/>
<dbReference type="KEGG" id="ebw:BWG_1742"/>
<dbReference type="HOGENOM" id="CLU_147249_0_2_6"/>
<dbReference type="GO" id="GO:0009425">
    <property type="term" value="C:bacterial-type flagellum basal body"/>
    <property type="evidence" value="ECO:0007669"/>
    <property type="project" value="UniProtKB-SubCell"/>
</dbReference>
<dbReference type="GO" id="GO:0003774">
    <property type="term" value="F:cytoskeletal motor activity"/>
    <property type="evidence" value="ECO:0007669"/>
    <property type="project" value="InterPro"/>
</dbReference>
<dbReference type="GO" id="GO:0005198">
    <property type="term" value="F:structural molecule activity"/>
    <property type="evidence" value="ECO:0007669"/>
    <property type="project" value="InterPro"/>
</dbReference>
<dbReference type="GO" id="GO:0071973">
    <property type="term" value="P:bacterial-type flagellum-dependent cell motility"/>
    <property type="evidence" value="ECO:0007669"/>
    <property type="project" value="InterPro"/>
</dbReference>
<dbReference type="HAMAP" id="MF_00724">
    <property type="entry name" value="FliE"/>
    <property type="match status" value="1"/>
</dbReference>
<dbReference type="InterPro" id="IPR001624">
    <property type="entry name" value="FliE"/>
</dbReference>
<dbReference type="NCBIfam" id="TIGR00205">
    <property type="entry name" value="fliE"/>
    <property type="match status" value="1"/>
</dbReference>
<dbReference type="PANTHER" id="PTHR34653">
    <property type="match status" value="1"/>
</dbReference>
<dbReference type="PANTHER" id="PTHR34653:SF1">
    <property type="entry name" value="FLAGELLAR HOOK-BASAL BODY COMPLEX PROTEIN FLIE"/>
    <property type="match status" value="1"/>
</dbReference>
<dbReference type="Pfam" id="PF02049">
    <property type="entry name" value="FliE"/>
    <property type="match status" value="1"/>
</dbReference>
<dbReference type="PRINTS" id="PR01006">
    <property type="entry name" value="FLGHOOKFLIE"/>
</dbReference>
<comment type="subcellular location">
    <subcellularLocation>
        <location evidence="1">Bacterial flagellum basal body</location>
    </subcellularLocation>
</comment>
<comment type="similarity">
    <text evidence="1">Belongs to the FliE family.</text>
</comment>
<evidence type="ECO:0000255" key="1">
    <source>
        <dbReference type="HAMAP-Rule" id="MF_00724"/>
    </source>
</evidence>
<keyword id="KW-0975">Bacterial flagellum</keyword>
<accession>C4ZQL1</accession>
<protein>
    <recommendedName>
        <fullName evidence="1">Flagellar hook-basal body complex protein FliE</fullName>
    </recommendedName>
</protein>